<accession>Q8VZE9</accession>
<name>U73B1_ARATH</name>
<keyword id="KW-0328">Glycosyltransferase</keyword>
<keyword id="KW-1185">Reference proteome</keyword>
<keyword id="KW-0808">Transferase</keyword>
<gene>
    <name type="primary">UGT73B1</name>
    <name type="ordered locus">At4g34138</name>
    <name type="ORF">F28A23.110</name>
</gene>
<evidence type="ECO:0000250" key="1"/>
<evidence type="ECO:0000269" key="2">
    <source>
    </source>
</evidence>
<evidence type="ECO:0000269" key="3">
    <source>
    </source>
</evidence>
<evidence type="ECO:0000305" key="4"/>
<proteinExistence type="evidence at transcript level"/>
<feature type="chain" id="PRO_0000403935" description="UDP-glycosyltransferase 73B1">
    <location>
        <begin position="1"/>
        <end position="488"/>
    </location>
</feature>
<feature type="binding site" evidence="1">
    <location>
        <position position="297"/>
    </location>
    <ligand>
        <name>UDP-alpha-D-glucose</name>
        <dbReference type="ChEBI" id="CHEBI:58885"/>
    </ligand>
</feature>
<feature type="binding site" evidence="1">
    <location>
        <begin position="356"/>
        <end position="358"/>
    </location>
    <ligand>
        <name>UDP-alpha-D-glucose</name>
        <dbReference type="ChEBI" id="CHEBI:58885"/>
    </ligand>
</feature>
<feature type="binding site" evidence="1">
    <location>
        <begin position="373"/>
        <end position="381"/>
    </location>
    <ligand>
        <name>UDP-alpha-D-glucose</name>
        <dbReference type="ChEBI" id="CHEBI:58885"/>
    </ligand>
</feature>
<feature type="binding site" evidence="1">
    <location>
        <begin position="395"/>
        <end position="398"/>
    </location>
    <ligand>
        <name>UDP-alpha-D-glucose</name>
        <dbReference type="ChEBI" id="CHEBI:58885"/>
    </ligand>
</feature>
<reference key="1">
    <citation type="journal article" date="1999" name="Nature">
        <title>Sequence and analysis of chromosome 4 of the plant Arabidopsis thaliana.</title>
        <authorList>
            <person name="Mayer K.F.X."/>
            <person name="Schueller C."/>
            <person name="Wambutt R."/>
            <person name="Murphy G."/>
            <person name="Volckaert G."/>
            <person name="Pohl T."/>
            <person name="Duesterhoeft A."/>
            <person name="Stiekema W."/>
            <person name="Entian K.-D."/>
            <person name="Terryn N."/>
            <person name="Harris B."/>
            <person name="Ansorge W."/>
            <person name="Brandt P."/>
            <person name="Grivell L.A."/>
            <person name="Rieger M."/>
            <person name="Weichselgartner M."/>
            <person name="de Simone V."/>
            <person name="Obermaier B."/>
            <person name="Mache R."/>
            <person name="Mueller M."/>
            <person name="Kreis M."/>
            <person name="Delseny M."/>
            <person name="Puigdomenech P."/>
            <person name="Watson M."/>
            <person name="Schmidtheini T."/>
            <person name="Reichert B."/>
            <person name="Portetelle D."/>
            <person name="Perez-Alonso M."/>
            <person name="Boutry M."/>
            <person name="Bancroft I."/>
            <person name="Vos P."/>
            <person name="Hoheisel J."/>
            <person name="Zimmermann W."/>
            <person name="Wedler H."/>
            <person name="Ridley P."/>
            <person name="Langham S.-A."/>
            <person name="McCullagh B."/>
            <person name="Bilham L."/>
            <person name="Robben J."/>
            <person name="van der Schueren J."/>
            <person name="Grymonprez B."/>
            <person name="Chuang Y.-J."/>
            <person name="Vandenbussche F."/>
            <person name="Braeken M."/>
            <person name="Weltjens I."/>
            <person name="Voet M."/>
            <person name="Bastiaens I."/>
            <person name="Aert R."/>
            <person name="Defoor E."/>
            <person name="Weitzenegger T."/>
            <person name="Bothe G."/>
            <person name="Ramsperger U."/>
            <person name="Hilbert H."/>
            <person name="Braun M."/>
            <person name="Holzer E."/>
            <person name="Brandt A."/>
            <person name="Peters S."/>
            <person name="van Staveren M."/>
            <person name="Dirkse W."/>
            <person name="Mooijman P."/>
            <person name="Klein Lankhorst R."/>
            <person name="Rose M."/>
            <person name="Hauf J."/>
            <person name="Koetter P."/>
            <person name="Berneiser S."/>
            <person name="Hempel S."/>
            <person name="Feldpausch M."/>
            <person name="Lamberth S."/>
            <person name="Van den Daele H."/>
            <person name="De Keyser A."/>
            <person name="Buysshaert C."/>
            <person name="Gielen J."/>
            <person name="Villarroel R."/>
            <person name="De Clercq R."/>
            <person name="van Montagu M."/>
            <person name="Rogers J."/>
            <person name="Cronin A."/>
            <person name="Quail M.A."/>
            <person name="Bray-Allen S."/>
            <person name="Clark L."/>
            <person name="Doggett J."/>
            <person name="Hall S."/>
            <person name="Kay M."/>
            <person name="Lennard N."/>
            <person name="McLay K."/>
            <person name="Mayes R."/>
            <person name="Pettett A."/>
            <person name="Rajandream M.A."/>
            <person name="Lyne M."/>
            <person name="Benes V."/>
            <person name="Rechmann S."/>
            <person name="Borkova D."/>
            <person name="Bloecker H."/>
            <person name="Scharfe M."/>
            <person name="Grimm M."/>
            <person name="Loehnert T.-H."/>
            <person name="Dose S."/>
            <person name="de Haan M."/>
            <person name="Maarse A.C."/>
            <person name="Schaefer M."/>
            <person name="Mueller-Auer S."/>
            <person name="Gabel C."/>
            <person name="Fuchs M."/>
            <person name="Fartmann B."/>
            <person name="Granderath K."/>
            <person name="Dauner D."/>
            <person name="Herzl A."/>
            <person name="Neumann S."/>
            <person name="Argiriou A."/>
            <person name="Vitale D."/>
            <person name="Liguori R."/>
            <person name="Piravandi E."/>
            <person name="Massenet O."/>
            <person name="Quigley F."/>
            <person name="Clabauld G."/>
            <person name="Muendlein A."/>
            <person name="Felber R."/>
            <person name="Schnabl S."/>
            <person name="Hiller R."/>
            <person name="Schmidt W."/>
            <person name="Lecharny A."/>
            <person name="Aubourg S."/>
            <person name="Chefdor F."/>
            <person name="Cooke R."/>
            <person name="Berger C."/>
            <person name="Monfort A."/>
            <person name="Casacuberta E."/>
            <person name="Gibbons T."/>
            <person name="Weber N."/>
            <person name="Vandenbol M."/>
            <person name="Bargues M."/>
            <person name="Terol J."/>
            <person name="Torres A."/>
            <person name="Perez-Perez A."/>
            <person name="Purnelle B."/>
            <person name="Bent E."/>
            <person name="Johnson S."/>
            <person name="Tacon D."/>
            <person name="Jesse T."/>
            <person name="Heijnen L."/>
            <person name="Schwarz S."/>
            <person name="Scholler P."/>
            <person name="Heber S."/>
            <person name="Francs P."/>
            <person name="Bielke C."/>
            <person name="Frishman D."/>
            <person name="Haase D."/>
            <person name="Lemcke K."/>
            <person name="Mewes H.-W."/>
            <person name="Stocker S."/>
            <person name="Zaccaria P."/>
            <person name="Bevan M."/>
            <person name="Wilson R.K."/>
            <person name="de la Bastide M."/>
            <person name="Habermann K."/>
            <person name="Parnell L."/>
            <person name="Dedhia N."/>
            <person name="Gnoj L."/>
            <person name="Schutz K."/>
            <person name="Huang E."/>
            <person name="Spiegel L."/>
            <person name="Sekhon M."/>
            <person name="Murray J."/>
            <person name="Sheet P."/>
            <person name="Cordes M."/>
            <person name="Abu-Threideh J."/>
            <person name="Stoneking T."/>
            <person name="Kalicki J."/>
            <person name="Graves T."/>
            <person name="Harmon G."/>
            <person name="Edwards J."/>
            <person name="Latreille P."/>
            <person name="Courtney L."/>
            <person name="Cloud J."/>
            <person name="Abbott A."/>
            <person name="Scott K."/>
            <person name="Johnson D."/>
            <person name="Minx P."/>
            <person name="Bentley D."/>
            <person name="Fulton B."/>
            <person name="Miller N."/>
            <person name="Greco T."/>
            <person name="Kemp K."/>
            <person name="Kramer J."/>
            <person name="Fulton L."/>
            <person name="Mardis E."/>
            <person name="Dante M."/>
            <person name="Pepin K."/>
            <person name="Hillier L.W."/>
            <person name="Nelson J."/>
            <person name="Spieth J."/>
            <person name="Ryan E."/>
            <person name="Andrews S."/>
            <person name="Geisel C."/>
            <person name="Layman D."/>
            <person name="Du H."/>
            <person name="Ali J."/>
            <person name="Berghoff A."/>
            <person name="Jones K."/>
            <person name="Drone K."/>
            <person name="Cotton M."/>
            <person name="Joshu C."/>
            <person name="Antonoiu B."/>
            <person name="Zidanic M."/>
            <person name="Strong C."/>
            <person name="Sun H."/>
            <person name="Lamar B."/>
            <person name="Yordan C."/>
            <person name="Ma P."/>
            <person name="Zhong J."/>
            <person name="Preston R."/>
            <person name="Vil D."/>
            <person name="Shekher M."/>
            <person name="Matero A."/>
            <person name="Shah R."/>
            <person name="Swaby I.K."/>
            <person name="O'Shaughnessy A."/>
            <person name="Rodriguez M."/>
            <person name="Hoffman J."/>
            <person name="Till S."/>
            <person name="Granat S."/>
            <person name="Shohdy N."/>
            <person name="Hasegawa A."/>
            <person name="Hameed A."/>
            <person name="Lodhi M."/>
            <person name="Johnson A."/>
            <person name="Chen E."/>
            <person name="Marra M.A."/>
            <person name="Martienssen R."/>
            <person name="McCombie W.R."/>
        </authorList>
    </citation>
    <scope>NUCLEOTIDE SEQUENCE [LARGE SCALE GENOMIC DNA]</scope>
    <source>
        <strain>cv. Columbia</strain>
    </source>
</reference>
<reference key="2">
    <citation type="journal article" date="2017" name="Plant J.">
        <title>Araport11: a complete reannotation of the Arabidopsis thaliana reference genome.</title>
        <authorList>
            <person name="Cheng C.Y."/>
            <person name="Krishnakumar V."/>
            <person name="Chan A.P."/>
            <person name="Thibaud-Nissen F."/>
            <person name="Schobel S."/>
            <person name="Town C.D."/>
        </authorList>
    </citation>
    <scope>GENOME REANNOTATION</scope>
    <source>
        <strain>cv. Columbia</strain>
    </source>
</reference>
<reference key="3">
    <citation type="journal article" date="2003" name="Science">
        <title>Empirical analysis of transcriptional activity in the Arabidopsis genome.</title>
        <authorList>
            <person name="Yamada K."/>
            <person name="Lim J."/>
            <person name="Dale J.M."/>
            <person name="Chen H."/>
            <person name="Shinn P."/>
            <person name="Palm C.J."/>
            <person name="Southwick A.M."/>
            <person name="Wu H.C."/>
            <person name="Kim C.J."/>
            <person name="Nguyen M."/>
            <person name="Pham P.K."/>
            <person name="Cheuk R.F."/>
            <person name="Karlin-Newmann G."/>
            <person name="Liu S.X."/>
            <person name="Lam B."/>
            <person name="Sakano H."/>
            <person name="Wu T."/>
            <person name="Yu G."/>
            <person name="Miranda M."/>
            <person name="Quach H.L."/>
            <person name="Tripp M."/>
            <person name="Chang C.H."/>
            <person name="Lee J.M."/>
            <person name="Toriumi M.J."/>
            <person name="Chan M.M."/>
            <person name="Tang C.C."/>
            <person name="Onodera C.S."/>
            <person name="Deng J.M."/>
            <person name="Akiyama K."/>
            <person name="Ansari Y."/>
            <person name="Arakawa T."/>
            <person name="Banh J."/>
            <person name="Banno F."/>
            <person name="Bowser L."/>
            <person name="Brooks S.Y."/>
            <person name="Carninci P."/>
            <person name="Chao Q."/>
            <person name="Choy N."/>
            <person name="Enju A."/>
            <person name="Goldsmith A.D."/>
            <person name="Gurjal M."/>
            <person name="Hansen N.F."/>
            <person name="Hayashizaki Y."/>
            <person name="Johnson-Hopson C."/>
            <person name="Hsuan V.W."/>
            <person name="Iida K."/>
            <person name="Karnes M."/>
            <person name="Khan S."/>
            <person name="Koesema E."/>
            <person name="Ishida J."/>
            <person name="Jiang P.X."/>
            <person name="Jones T."/>
            <person name="Kawai J."/>
            <person name="Kamiya A."/>
            <person name="Meyers C."/>
            <person name="Nakajima M."/>
            <person name="Narusaka M."/>
            <person name="Seki M."/>
            <person name="Sakurai T."/>
            <person name="Satou M."/>
            <person name="Tamse R."/>
            <person name="Vaysberg M."/>
            <person name="Wallender E.K."/>
            <person name="Wong C."/>
            <person name="Yamamura Y."/>
            <person name="Yuan S."/>
            <person name="Shinozaki K."/>
            <person name="Davis R.W."/>
            <person name="Theologis A."/>
            <person name="Ecker J.R."/>
        </authorList>
    </citation>
    <scope>NUCLEOTIDE SEQUENCE [LARGE SCALE MRNA]</scope>
    <source>
        <strain>cv. Columbia</strain>
    </source>
</reference>
<reference key="4">
    <citation type="journal article" date="2001" name="J. Biol. Chem.">
        <title>Phylogenetic analysis of the UDP-glycosyltransferase multigene family of Arabidopsis thaliana.</title>
        <authorList>
            <person name="Li Y."/>
            <person name="Baldauf S."/>
            <person name="Lim E.K."/>
            <person name="Bowles D.J."/>
        </authorList>
    </citation>
    <scope>GENE FAMILY</scope>
</reference>
<reference key="5">
    <citation type="journal article" date="2004" name="Biotechnol. Bioeng.">
        <title>Arabidopsis glycosyltransferases as biocatalysts in fermentation for regioselective synthesis of diverse quercetin glucosides.</title>
        <authorList>
            <person name="Lim E.K."/>
            <person name="Ashford D.A."/>
            <person name="Hou B."/>
            <person name="Jackson R.G."/>
            <person name="Bowles D.J."/>
        </authorList>
    </citation>
    <scope>FUNCTION</scope>
</reference>
<reference key="6">
    <citation type="journal article" date="2005" name="Plant Physiol.">
        <title>Pathogen-responsive expression of glycosyltransferase genes UGT73B3 and UGT73B5 is necessary for resistance to Pseudomonas syringae pv tomato in Arabidopsis.</title>
        <authorList>
            <person name="Langlois-Meurinne M."/>
            <person name="Gachon C.M."/>
            <person name="Saindrenan P."/>
        </authorList>
    </citation>
    <scope>INDUCTION BY PATHOGEN AND SALICYLIC ACID</scope>
</reference>
<protein>
    <recommendedName>
        <fullName>UDP-glycosyltransferase 73B1</fullName>
        <ecNumber>2.4.1.-</ecNumber>
    </recommendedName>
</protein>
<organism>
    <name type="scientific">Arabidopsis thaliana</name>
    <name type="common">Mouse-ear cress</name>
    <dbReference type="NCBI Taxonomy" id="3702"/>
    <lineage>
        <taxon>Eukaryota</taxon>
        <taxon>Viridiplantae</taxon>
        <taxon>Streptophyta</taxon>
        <taxon>Embryophyta</taxon>
        <taxon>Tracheophyta</taxon>
        <taxon>Spermatophyta</taxon>
        <taxon>Magnoliopsida</taxon>
        <taxon>eudicotyledons</taxon>
        <taxon>Gunneridae</taxon>
        <taxon>Pentapetalae</taxon>
        <taxon>rosids</taxon>
        <taxon>malvids</taxon>
        <taxon>Brassicales</taxon>
        <taxon>Brassicaceae</taxon>
        <taxon>Camelineae</taxon>
        <taxon>Arabidopsis</taxon>
    </lineage>
</organism>
<dbReference type="EC" id="2.4.1.-"/>
<dbReference type="EMBL" id="AL161584">
    <property type="status" value="NOT_ANNOTATED_CDS"/>
    <property type="molecule type" value="Genomic_DNA"/>
</dbReference>
<dbReference type="EMBL" id="CP002687">
    <property type="protein sequence ID" value="AEE86330.1"/>
    <property type="molecule type" value="Genomic_DNA"/>
</dbReference>
<dbReference type="EMBL" id="AY065005">
    <property type="protein sequence ID" value="AAL57652.1"/>
    <property type="molecule type" value="mRNA"/>
</dbReference>
<dbReference type="EMBL" id="AY090273">
    <property type="protein sequence ID" value="AAL90934.1"/>
    <property type="molecule type" value="mRNA"/>
</dbReference>
<dbReference type="EMBL" id="BT000754">
    <property type="protein sequence ID" value="AAN31894.1"/>
    <property type="molecule type" value="mRNA"/>
</dbReference>
<dbReference type="RefSeq" id="NP_567955.1">
    <property type="nucleotide sequence ID" value="NM_119576.4"/>
</dbReference>
<dbReference type="SMR" id="Q8VZE9"/>
<dbReference type="FunCoup" id="Q8VZE9">
    <property type="interactions" value="172"/>
</dbReference>
<dbReference type="STRING" id="3702.Q8VZE9"/>
<dbReference type="CAZy" id="GT1">
    <property type="family name" value="Glycosyltransferase Family 1"/>
</dbReference>
<dbReference type="PaxDb" id="3702-AT4G34138.1"/>
<dbReference type="ProteomicsDB" id="242589"/>
<dbReference type="EnsemblPlants" id="AT4G34138.1">
    <property type="protein sequence ID" value="AT4G34138.1"/>
    <property type="gene ID" value="AT4G34138"/>
</dbReference>
<dbReference type="GeneID" id="829561"/>
<dbReference type="Gramene" id="AT4G34138.1">
    <property type="protein sequence ID" value="AT4G34138.1"/>
    <property type="gene ID" value="AT4G34138"/>
</dbReference>
<dbReference type="KEGG" id="ath:AT4G34138"/>
<dbReference type="Araport" id="AT4G34138"/>
<dbReference type="TAIR" id="AT4G34138">
    <property type="gene designation" value="UGT73B1"/>
</dbReference>
<dbReference type="eggNOG" id="KOG1192">
    <property type="taxonomic scope" value="Eukaryota"/>
</dbReference>
<dbReference type="HOGENOM" id="CLU_001724_2_2_1"/>
<dbReference type="InParanoid" id="Q8VZE9"/>
<dbReference type="OMA" id="VGVQTWI"/>
<dbReference type="OrthoDB" id="5835829at2759"/>
<dbReference type="PhylomeDB" id="Q8VZE9"/>
<dbReference type="BioCyc" id="ARA:AT4G34138-MONOMER"/>
<dbReference type="BRENDA" id="2.4.1.170">
    <property type="organism ID" value="399"/>
</dbReference>
<dbReference type="BRENDA" id="2.4.1.81">
    <property type="organism ID" value="399"/>
</dbReference>
<dbReference type="PRO" id="PR:Q8VZE9"/>
<dbReference type="Proteomes" id="UP000006548">
    <property type="component" value="Chromosome 4"/>
</dbReference>
<dbReference type="ExpressionAtlas" id="Q8VZE9">
    <property type="expression patterns" value="baseline and differential"/>
</dbReference>
<dbReference type="GO" id="GO:0080043">
    <property type="term" value="F:quercetin 3-O-glucosyltransferase activity"/>
    <property type="evidence" value="ECO:0000314"/>
    <property type="project" value="TAIR"/>
</dbReference>
<dbReference type="GO" id="GO:0080044">
    <property type="term" value="F:quercetin 7-O-glucosyltransferase activity"/>
    <property type="evidence" value="ECO:0000314"/>
    <property type="project" value="TAIR"/>
</dbReference>
<dbReference type="CDD" id="cd03784">
    <property type="entry name" value="GT1_Gtf-like"/>
    <property type="match status" value="1"/>
</dbReference>
<dbReference type="FunFam" id="3.40.50.2000:FF:000047">
    <property type="entry name" value="Glycosyltransferase"/>
    <property type="match status" value="1"/>
</dbReference>
<dbReference type="FunFam" id="3.40.50.2000:FF:000071">
    <property type="entry name" value="Glycosyltransferase"/>
    <property type="match status" value="1"/>
</dbReference>
<dbReference type="Gene3D" id="3.40.50.2000">
    <property type="entry name" value="Glycogen Phosphorylase B"/>
    <property type="match status" value="2"/>
</dbReference>
<dbReference type="InterPro" id="IPR002213">
    <property type="entry name" value="UDP_glucos_trans"/>
</dbReference>
<dbReference type="InterPro" id="IPR035595">
    <property type="entry name" value="UDP_glycos_trans_CS"/>
</dbReference>
<dbReference type="PANTHER" id="PTHR48047">
    <property type="entry name" value="GLYCOSYLTRANSFERASE"/>
    <property type="match status" value="1"/>
</dbReference>
<dbReference type="PANTHER" id="PTHR48047:SF45">
    <property type="entry name" value="SCOPOLETIN GLUCOSYLTRANSFERASE-LIKE"/>
    <property type="match status" value="1"/>
</dbReference>
<dbReference type="Pfam" id="PF00201">
    <property type="entry name" value="UDPGT"/>
    <property type="match status" value="1"/>
</dbReference>
<dbReference type="SUPFAM" id="SSF53756">
    <property type="entry name" value="UDP-Glycosyltransferase/glycogen phosphorylase"/>
    <property type="match status" value="1"/>
</dbReference>
<dbReference type="PROSITE" id="PS00375">
    <property type="entry name" value="UDPGT"/>
    <property type="match status" value="1"/>
</dbReference>
<sequence length="488" mass="54836">MGTPVEVSKLHFLLFPFMAHGHMIPTLDMAKLFATKGAKSTILTTPLNAKLFFEKPIKSFNQDNPGLEDITIQILNFPCTELGLPDGCENTDFIFSTPDLNVGDLSQKFLLAMKYFEEPLEELLVTMRPDCLVGNMFFPWSTKVAEKFGVPRLVFHGTGYFSLCASHCIRLPKNVATSSEPFVIPDLPGDILITEEQVMETEEESVMGRFMKAIRDSERDSFGVLVNSFYELEQAYSDYFKSFVAKRAWHIGPLSLGNRKFEEKAERGKKASIDEHECLKWLDSKKCDSVIYMAFGTMSSFKNEQLIEIAAGLDMSGHDFVWVVNRKGSQVEKEDWLPEGFEEKTKGKGLIIRGWAPQVLILEHKAIGGFLTHCGWNSLLEGVAAGLPMVTWPVGAEQFYNEKLVTQVLKTGVSVGVKKMMQVVGDFISREKVEGAVREVMVGEERRKRAKELAEMAKNAVKEGGSSDLEVDRLMEELTLVKLQKEKV</sequence>
<comment type="function">
    <text evidence="2">Possesses low quercetin 3-O-glucosyltransferase and 7-O-glucosyltransferase activities in vitro.</text>
</comment>
<comment type="induction">
    <text evidence="3">Not induced by pathogen or salicylic acid.</text>
</comment>
<comment type="similarity">
    <text evidence="4">Belongs to the UDP-glycosyltransferase family.</text>
</comment>